<evidence type="ECO:0000269" key="1">
    <source ref="1"/>
</evidence>
<evidence type="ECO:0000303" key="2">
    <source ref="1"/>
</evidence>
<evidence type="ECO:0000305" key="3"/>
<accession>C0HJJ8</accession>
<keyword id="KW-0903">Direct protein sequencing</keyword>
<keyword id="KW-0378">Hydrolase</keyword>
<keyword id="KW-0645">Protease</keyword>
<keyword id="KW-0964">Secreted</keyword>
<keyword id="KW-0720">Serine protease</keyword>
<sequence>GTQTNAPWGLARLIS</sequence>
<feature type="chain" id="PRO_0000436784" description="Alkaline serine protease" evidence="1">
    <location>
        <begin position="1"/>
        <end position="15" status="greater than"/>
    </location>
</feature>
<feature type="non-terminal residue" evidence="2">
    <location>
        <position position="15"/>
    </location>
</feature>
<protein>
    <recommendedName>
        <fullName evidence="2">Alkaline serine protease</fullName>
        <shortName evidence="2">AkP</shortName>
        <ecNumber evidence="1">3.4.21.-</ecNumber>
    </recommendedName>
</protein>
<organism>
    <name type="scientific">Termitomyces clypeatus</name>
    <name type="common">White-rot fungus</name>
    <name type="synonym">Sinotermitomyces taiwanensis</name>
    <dbReference type="NCBI Taxonomy" id="182030"/>
    <lineage>
        <taxon>Eukaryota</taxon>
        <taxon>Fungi</taxon>
        <taxon>Dikarya</taxon>
        <taxon>Basidiomycota</taxon>
        <taxon>Agaricomycotina</taxon>
        <taxon>Agaricomycetes</taxon>
        <taxon>Agaricomycetidae</taxon>
        <taxon>Agaricales</taxon>
        <taxon>Tricholomatineae</taxon>
        <taxon>Lyophyllaceae</taxon>
        <taxon>Termitomyces</taxon>
    </lineage>
</organism>
<name>ASPR_TERCL</name>
<dbReference type="EC" id="3.4.21.-" evidence="1"/>
<dbReference type="GO" id="GO:0005576">
    <property type="term" value="C:extracellular region"/>
    <property type="evidence" value="ECO:0007669"/>
    <property type="project" value="UniProtKB-SubCell"/>
</dbReference>
<dbReference type="GO" id="GO:0008236">
    <property type="term" value="F:serine-type peptidase activity"/>
    <property type="evidence" value="ECO:0007669"/>
    <property type="project" value="UniProtKB-KW"/>
</dbReference>
<dbReference type="GO" id="GO:0006508">
    <property type="term" value="P:proteolysis"/>
    <property type="evidence" value="ECO:0007669"/>
    <property type="project" value="UniProtKB-KW"/>
</dbReference>
<comment type="function">
    <text evidence="1">Protease capable of hydrolyzing gelatin and cell surface heparan sulfate proteoglycans (HSPGs) in vitro.</text>
</comment>
<comment type="activity regulation">
    <text evidence="1">Inhibited by serine protease inhibitors phenylmethanesulphonylfluoride (PMSF) and di-iodopropylfluorophosphate (DFP).</text>
</comment>
<comment type="biophysicochemical properties">
    <kinetics>
        <KM evidence="1">2.7 mM for azocasein</KM>
    </kinetics>
    <phDependence>
        <text evidence="1">Optimum pH is 9. Activity is relatively stable between pH 8-10 but drops at lower pH and is absent at pH 4.</text>
    </phDependence>
    <temperatureDependence>
        <text evidence="1">Optimum temperature is 45 degrees Celsius.</text>
    </temperatureDependence>
</comment>
<comment type="subunit">
    <text evidence="1">Monomer.</text>
</comment>
<comment type="subcellular location">
    <subcellularLocation>
        <location evidence="1">Secreted</location>
    </subcellularLocation>
</comment>
<comment type="similarity">
    <text evidence="3">Belongs to the peptidase S8 family.</text>
</comment>
<proteinExistence type="evidence at protein level"/>
<reference key="1">
    <citation type="journal article" date="2016" name="Int. J. Biol. Macromol.">
        <title>AkP from mushroom Termitomyces clypeatus is a proteoglycan specific protease with apoptotic effect on HepG2.</title>
        <authorList>
            <person name="Majumder R."/>
            <person name="Banik S.P."/>
            <person name="Khowala S."/>
        </authorList>
    </citation>
    <scope>PROTEIN SEQUENCE</scope>
    <scope>FUNCTION</scope>
    <scope>ACTIVITY REGULATION</scope>
    <scope>BIOPHYSICOCHEMICAL PROPERTIES</scope>
    <scope>SUBUNIT</scope>
    <scope>SUBCELLULAR LOCATION</scope>
    <source>
        <strain evidence="2">MTCC 5091</strain>
    </source>
</reference>